<protein>
    <recommendedName>
        <fullName>F-box/FBD/LRR-repeat protein At1g51370</fullName>
    </recommendedName>
</protein>
<organism>
    <name type="scientific">Arabidopsis thaliana</name>
    <name type="common">Mouse-ear cress</name>
    <dbReference type="NCBI Taxonomy" id="3702"/>
    <lineage>
        <taxon>Eukaryota</taxon>
        <taxon>Viridiplantae</taxon>
        <taxon>Streptophyta</taxon>
        <taxon>Embryophyta</taxon>
        <taxon>Tracheophyta</taxon>
        <taxon>Spermatophyta</taxon>
        <taxon>Magnoliopsida</taxon>
        <taxon>eudicotyledons</taxon>
        <taxon>Gunneridae</taxon>
        <taxon>Pentapetalae</taxon>
        <taxon>rosids</taxon>
        <taxon>malvids</taxon>
        <taxon>Brassicales</taxon>
        <taxon>Brassicaceae</taxon>
        <taxon>Camelineae</taxon>
        <taxon>Arabidopsis</taxon>
    </lineage>
</organism>
<keyword id="KW-0025">Alternative splicing</keyword>
<keyword id="KW-0433">Leucine-rich repeat</keyword>
<keyword id="KW-1185">Reference proteome</keyword>
<keyword id="KW-0677">Repeat</keyword>
<evidence type="ECO:0000255" key="1">
    <source>
        <dbReference type="PROSITE-ProRule" id="PRU00080"/>
    </source>
</evidence>
<accession>Q6DBN6</accession>
<accession>Q3ECS4</accession>
<feature type="chain" id="PRO_0000283099" description="F-box/FBD/LRR-repeat protein At1g51370">
    <location>
        <begin position="1"/>
        <end position="435"/>
    </location>
</feature>
<feature type="domain" description="F-box" evidence="1">
    <location>
        <begin position="18"/>
        <end position="64"/>
    </location>
</feature>
<feature type="repeat" description="LRR 1">
    <location>
        <begin position="123"/>
        <end position="148"/>
    </location>
</feature>
<feature type="repeat" description="LRR 2">
    <location>
        <begin position="170"/>
        <end position="195"/>
    </location>
</feature>
<feature type="repeat" description="LRR 3">
    <location>
        <begin position="234"/>
        <end position="259"/>
    </location>
</feature>
<feature type="repeat" description="LRR 4">
    <location>
        <begin position="262"/>
        <end position="287"/>
    </location>
</feature>
<feature type="repeat" description="LRR 5">
    <location>
        <begin position="314"/>
        <end position="340"/>
    </location>
</feature>
<feature type="domain" description="FBD">
    <location>
        <begin position="354"/>
        <end position="406"/>
    </location>
</feature>
<sequence>MVGGKKKTKICDKVSHEEDRISQLPEPLISEILFHLSTKDSVRTSALSTKWRYLWQSVPGLDLDPYASSNTNTIVSFVESFFDSHRDSWIRKLRLDLGYHHDKYDLMSWIDAATTRRIQHLDVHCFHDNKIPLSIYTCTTLVHLRLRWAVLTNPEFVSLPCLKIMHFENVSYPNETTLQKLISGSPVLEELILFSTMYPKGNVLQLRSDTLKRLDINEFIDVVIYAPLLQCLRAKMYSTKNFQIISSGFPAKLDIDFVNTGGRYQKKKVIEDILIDISRVRDLVISSNTWKEFFLYSKSRPLLQFRYISHLNARFYISDLEMLPTLLESCPKLESLILEMVKNQSTRRHGEKREPNVMVSTVPWCLVSSLKFVELKRSIPRYEGEMELVRYVLTNSTVLKKLRLNVYYTKKAKCAFLTELVAIPRCSSTCVVLVL</sequence>
<proteinExistence type="evidence at transcript level"/>
<gene>
    <name type="ordered locus">At1g51370</name>
    <name type="ORF">F11M15.27</name>
</gene>
<reference key="1">
    <citation type="journal article" date="2000" name="Nature">
        <title>Sequence and analysis of chromosome 1 of the plant Arabidopsis thaliana.</title>
        <authorList>
            <person name="Theologis A."/>
            <person name="Ecker J.R."/>
            <person name="Palm C.J."/>
            <person name="Federspiel N.A."/>
            <person name="Kaul S."/>
            <person name="White O."/>
            <person name="Alonso J."/>
            <person name="Altafi H."/>
            <person name="Araujo R."/>
            <person name="Bowman C.L."/>
            <person name="Brooks S.Y."/>
            <person name="Buehler E."/>
            <person name="Chan A."/>
            <person name="Chao Q."/>
            <person name="Chen H."/>
            <person name="Cheuk R.F."/>
            <person name="Chin C.W."/>
            <person name="Chung M.K."/>
            <person name="Conn L."/>
            <person name="Conway A.B."/>
            <person name="Conway A.R."/>
            <person name="Creasy T.H."/>
            <person name="Dewar K."/>
            <person name="Dunn P."/>
            <person name="Etgu P."/>
            <person name="Feldblyum T.V."/>
            <person name="Feng J.-D."/>
            <person name="Fong B."/>
            <person name="Fujii C.Y."/>
            <person name="Gill J.E."/>
            <person name="Goldsmith A.D."/>
            <person name="Haas B."/>
            <person name="Hansen N.F."/>
            <person name="Hughes B."/>
            <person name="Huizar L."/>
            <person name="Hunter J.L."/>
            <person name="Jenkins J."/>
            <person name="Johnson-Hopson C."/>
            <person name="Khan S."/>
            <person name="Khaykin E."/>
            <person name="Kim C.J."/>
            <person name="Koo H.L."/>
            <person name="Kremenetskaia I."/>
            <person name="Kurtz D.B."/>
            <person name="Kwan A."/>
            <person name="Lam B."/>
            <person name="Langin-Hooper S."/>
            <person name="Lee A."/>
            <person name="Lee J.M."/>
            <person name="Lenz C.A."/>
            <person name="Li J.H."/>
            <person name="Li Y.-P."/>
            <person name="Lin X."/>
            <person name="Liu S.X."/>
            <person name="Liu Z.A."/>
            <person name="Luros J.S."/>
            <person name="Maiti R."/>
            <person name="Marziali A."/>
            <person name="Militscher J."/>
            <person name="Miranda M."/>
            <person name="Nguyen M."/>
            <person name="Nierman W.C."/>
            <person name="Osborne B.I."/>
            <person name="Pai G."/>
            <person name="Peterson J."/>
            <person name="Pham P.K."/>
            <person name="Rizzo M."/>
            <person name="Rooney T."/>
            <person name="Rowley D."/>
            <person name="Sakano H."/>
            <person name="Salzberg S.L."/>
            <person name="Schwartz J.R."/>
            <person name="Shinn P."/>
            <person name="Southwick A.M."/>
            <person name="Sun H."/>
            <person name="Tallon L.J."/>
            <person name="Tambunga G."/>
            <person name="Toriumi M.J."/>
            <person name="Town C.D."/>
            <person name="Utterback T."/>
            <person name="Van Aken S."/>
            <person name="Vaysberg M."/>
            <person name="Vysotskaia V.S."/>
            <person name="Walker M."/>
            <person name="Wu D."/>
            <person name="Yu G."/>
            <person name="Fraser C.M."/>
            <person name="Venter J.C."/>
            <person name="Davis R.W."/>
        </authorList>
    </citation>
    <scope>NUCLEOTIDE SEQUENCE [LARGE SCALE GENOMIC DNA]</scope>
    <source>
        <strain>cv. Columbia</strain>
    </source>
</reference>
<reference key="2">
    <citation type="journal article" date="2017" name="Plant J.">
        <title>Araport11: a complete reannotation of the Arabidopsis thaliana reference genome.</title>
        <authorList>
            <person name="Cheng C.Y."/>
            <person name="Krishnakumar V."/>
            <person name="Chan A.P."/>
            <person name="Thibaud-Nissen F."/>
            <person name="Schobel S."/>
            <person name="Town C.D."/>
        </authorList>
    </citation>
    <scope>GENOME REANNOTATION</scope>
    <source>
        <strain>cv. Columbia</strain>
    </source>
</reference>
<reference key="3">
    <citation type="submission" date="2005-03" db="EMBL/GenBank/DDBJ databases">
        <title>Arabidopsis ORF clones.</title>
        <authorList>
            <person name="Kim C.J."/>
            <person name="Chen H."/>
            <person name="Cheuk R.F."/>
            <person name="Shinn P."/>
            <person name="Ecker J.R."/>
        </authorList>
    </citation>
    <scope>NUCLEOTIDE SEQUENCE [LARGE SCALE MRNA]</scope>
    <source>
        <strain>cv. Columbia</strain>
    </source>
</reference>
<reference key="4">
    <citation type="submission" date="2006-07" db="EMBL/GenBank/DDBJ databases">
        <title>Large-scale analysis of RIKEN Arabidopsis full-length (RAFL) cDNAs.</title>
        <authorList>
            <person name="Totoki Y."/>
            <person name="Seki M."/>
            <person name="Ishida J."/>
            <person name="Nakajima M."/>
            <person name="Enju A."/>
            <person name="Kamiya A."/>
            <person name="Narusaka M."/>
            <person name="Shin-i T."/>
            <person name="Nakagawa M."/>
            <person name="Sakamoto N."/>
            <person name="Oishi K."/>
            <person name="Kohara Y."/>
            <person name="Kobayashi M."/>
            <person name="Toyoda A."/>
            <person name="Sakaki Y."/>
            <person name="Sakurai T."/>
            <person name="Iida K."/>
            <person name="Akiyama K."/>
            <person name="Satou M."/>
            <person name="Toyoda T."/>
            <person name="Konagaya A."/>
            <person name="Carninci P."/>
            <person name="Kawai J."/>
            <person name="Hayashizaki Y."/>
            <person name="Shinozaki K."/>
        </authorList>
    </citation>
    <scope>NUCLEOTIDE SEQUENCE [LARGE SCALE MRNA]</scope>
    <source>
        <strain>cv. Columbia</strain>
    </source>
</reference>
<comment type="alternative products">
    <event type="alternative splicing"/>
    <isoform>
        <id>Q6DBN6-1</id>
        <name>1</name>
        <sequence type="displayed"/>
    </isoform>
    <text>A number of isoforms are produced. According to EST sequences.</text>
</comment>
<dbReference type="EMBL" id="AC006085">
    <property type="status" value="NOT_ANNOTATED_CDS"/>
    <property type="molecule type" value="Genomic_DNA"/>
</dbReference>
<dbReference type="EMBL" id="CP002684">
    <property type="protein sequence ID" value="AEE32658.1"/>
    <property type="molecule type" value="Genomic_DNA"/>
</dbReference>
<dbReference type="EMBL" id="BT014986">
    <property type="protein sequence ID" value="AAT70437.1"/>
    <property type="molecule type" value="mRNA"/>
</dbReference>
<dbReference type="EMBL" id="BT015850">
    <property type="protein sequence ID" value="AAU94413.1"/>
    <property type="molecule type" value="mRNA"/>
</dbReference>
<dbReference type="EMBL" id="AK228894">
    <property type="protein sequence ID" value="BAF00784.1"/>
    <property type="molecule type" value="mRNA"/>
</dbReference>
<dbReference type="RefSeq" id="NP_175548.4">
    <molecule id="Q6DBN6-1"/>
    <property type="nucleotide sequence ID" value="NM_104015.4"/>
</dbReference>
<dbReference type="BioGRID" id="26786">
    <property type="interactions" value="1"/>
</dbReference>
<dbReference type="FunCoup" id="Q6DBN6">
    <property type="interactions" value="103"/>
</dbReference>
<dbReference type="IntAct" id="Q6DBN6">
    <property type="interactions" value="1"/>
</dbReference>
<dbReference type="PaxDb" id="3702-AT1G51370.1"/>
<dbReference type="ProteomicsDB" id="230504">
    <molecule id="Q6DBN6-1"/>
</dbReference>
<dbReference type="EnsemblPlants" id="AT1G51370.1">
    <molecule id="Q6DBN6-1"/>
    <property type="protein sequence ID" value="AT1G51370.1"/>
    <property type="gene ID" value="AT1G51370"/>
</dbReference>
<dbReference type="GeneID" id="841561"/>
<dbReference type="Gramene" id="AT1G51370.1">
    <molecule id="Q6DBN6-1"/>
    <property type="protein sequence ID" value="AT1G51370.1"/>
    <property type="gene ID" value="AT1G51370"/>
</dbReference>
<dbReference type="KEGG" id="ath:AT1G51370"/>
<dbReference type="Araport" id="AT1G51370"/>
<dbReference type="TAIR" id="AT1G51370"/>
<dbReference type="InParanoid" id="Q6DBN6"/>
<dbReference type="OMA" id="PRYEGEM"/>
<dbReference type="PhylomeDB" id="Q6DBN6"/>
<dbReference type="PRO" id="PR:Q6DBN6"/>
<dbReference type="Proteomes" id="UP000006548">
    <property type="component" value="Chromosome 1"/>
</dbReference>
<dbReference type="ExpressionAtlas" id="Q6DBN6">
    <property type="expression patterns" value="baseline and differential"/>
</dbReference>
<dbReference type="CDD" id="cd22160">
    <property type="entry name" value="F-box_AtFBL13-like"/>
    <property type="match status" value="1"/>
</dbReference>
<dbReference type="Gene3D" id="3.80.10.10">
    <property type="entry name" value="Ribonuclease Inhibitor"/>
    <property type="match status" value="1"/>
</dbReference>
<dbReference type="InterPro" id="IPR036047">
    <property type="entry name" value="F-box-like_dom_sf"/>
</dbReference>
<dbReference type="InterPro" id="IPR053781">
    <property type="entry name" value="F-box_AtFBL13-like"/>
</dbReference>
<dbReference type="InterPro" id="IPR001810">
    <property type="entry name" value="F-box_dom"/>
</dbReference>
<dbReference type="InterPro" id="IPR006566">
    <property type="entry name" value="FBD"/>
</dbReference>
<dbReference type="InterPro" id="IPR050232">
    <property type="entry name" value="FBL13/AtMIF1-like"/>
</dbReference>
<dbReference type="InterPro" id="IPR032675">
    <property type="entry name" value="LRR_dom_sf"/>
</dbReference>
<dbReference type="InterPro" id="IPR055411">
    <property type="entry name" value="LRR_FXL15/At3g58940/PEG3-like"/>
</dbReference>
<dbReference type="PANTHER" id="PTHR31900">
    <property type="entry name" value="F-BOX/RNI SUPERFAMILY PROTEIN-RELATED"/>
    <property type="match status" value="1"/>
</dbReference>
<dbReference type="PANTHER" id="PTHR31900:SF33">
    <property type="entry name" value="PROTEIN WITH RNI-LIKE_FBD-LIKE DOMAIN"/>
    <property type="match status" value="1"/>
</dbReference>
<dbReference type="Pfam" id="PF00646">
    <property type="entry name" value="F-box"/>
    <property type="match status" value="1"/>
</dbReference>
<dbReference type="Pfam" id="PF08387">
    <property type="entry name" value="FBD"/>
    <property type="match status" value="1"/>
</dbReference>
<dbReference type="Pfam" id="PF24758">
    <property type="entry name" value="LRR_At5g56370"/>
    <property type="match status" value="1"/>
</dbReference>
<dbReference type="SMART" id="SM00579">
    <property type="entry name" value="FBD"/>
    <property type="match status" value="1"/>
</dbReference>
<dbReference type="SMART" id="SM00256">
    <property type="entry name" value="FBOX"/>
    <property type="match status" value="1"/>
</dbReference>
<dbReference type="SUPFAM" id="SSF81383">
    <property type="entry name" value="F-box domain"/>
    <property type="match status" value="1"/>
</dbReference>
<dbReference type="SUPFAM" id="SSF52047">
    <property type="entry name" value="RNI-like"/>
    <property type="match status" value="1"/>
</dbReference>
<dbReference type="PROSITE" id="PS50181">
    <property type="entry name" value="FBOX"/>
    <property type="match status" value="1"/>
</dbReference>
<name>FDL6_ARATH</name>